<keyword id="KW-1185">Reference proteome</keyword>
<accession>Q9A3E9</accession>
<sequence length="280" mass="30263">MTPSAGLGLKSQHYGDAIACDAEGLWFEVHPENYMSAGGPRLAALEAVRARRPVSLHGVGLSLAADTDPDPEHLQALKRLVDRFDPFVVSEHLAWSTHRGAHHPDLLPFPRTRAALDRICGNVARMQDALQRRVLIENPSLYLPLKGHALDEVDFLEALATRTGCGLLVDVNNVFVSAQNLGYAPETYLDALPAHAIGEIHLAGHAPDPGGSNLLIDTHGAPVAEVVWTLYARLIARIGPRPTLIERDDDIPDFAALMAERNRAVAVLASGQTAREPAHV</sequence>
<organism>
    <name type="scientific">Caulobacter vibrioides (strain ATCC 19089 / CIP 103742 / CB 15)</name>
    <name type="common">Caulobacter crescentus</name>
    <dbReference type="NCBI Taxonomy" id="190650"/>
    <lineage>
        <taxon>Bacteria</taxon>
        <taxon>Pseudomonadati</taxon>
        <taxon>Pseudomonadota</taxon>
        <taxon>Alphaproteobacteria</taxon>
        <taxon>Caulobacterales</taxon>
        <taxon>Caulobacteraceae</taxon>
        <taxon>Caulobacter</taxon>
    </lineage>
</organism>
<proteinExistence type="inferred from homology"/>
<gene>
    <name type="ordered locus">CC_3255</name>
</gene>
<name>Y3255_CAUVC</name>
<comment type="similarity">
    <text evidence="1">Belongs to the UPF0276 family.</text>
</comment>
<evidence type="ECO:0000255" key="1">
    <source>
        <dbReference type="HAMAP-Rule" id="MF_00697"/>
    </source>
</evidence>
<feature type="chain" id="PRO_0000192694" description="UPF0276 protein CC_3255">
    <location>
        <begin position="1"/>
        <end position="280"/>
    </location>
</feature>
<protein>
    <recommendedName>
        <fullName evidence="1">UPF0276 protein CC_3255</fullName>
    </recommendedName>
</protein>
<dbReference type="EMBL" id="AE005673">
    <property type="protein sequence ID" value="AAK25217.1"/>
    <property type="molecule type" value="Genomic_DNA"/>
</dbReference>
<dbReference type="PIR" id="E87652">
    <property type="entry name" value="E87652"/>
</dbReference>
<dbReference type="RefSeq" id="NP_422049.1">
    <property type="nucleotide sequence ID" value="NC_002696.2"/>
</dbReference>
<dbReference type="RefSeq" id="WP_010921088.1">
    <property type="nucleotide sequence ID" value="NC_002696.2"/>
</dbReference>
<dbReference type="SMR" id="Q9A3E9"/>
<dbReference type="STRING" id="190650.CC_3255"/>
<dbReference type="DNASU" id="943381"/>
<dbReference type="EnsemblBacteria" id="AAK25217">
    <property type="protein sequence ID" value="AAK25217"/>
    <property type="gene ID" value="CC_3255"/>
</dbReference>
<dbReference type="KEGG" id="ccr:CC_3255"/>
<dbReference type="PATRIC" id="fig|190650.5.peg.3261"/>
<dbReference type="eggNOG" id="COG3220">
    <property type="taxonomic scope" value="Bacteria"/>
</dbReference>
<dbReference type="HOGENOM" id="CLU_064263_0_0_5"/>
<dbReference type="BioCyc" id="CAULO:CC3255-MONOMER"/>
<dbReference type="Proteomes" id="UP000001816">
    <property type="component" value="Chromosome"/>
</dbReference>
<dbReference type="Gene3D" id="3.20.20.150">
    <property type="entry name" value="Divalent-metal-dependent TIM barrel enzymes"/>
    <property type="match status" value="1"/>
</dbReference>
<dbReference type="HAMAP" id="MF_00697">
    <property type="entry name" value="UPF0276"/>
    <property type="match status" value="1"/>
</dbReference>
<dbReference type="InterPro" id="IPR007801">
    <property type="entry name" value="MbnB/TglH/ChrH"/>
</dbReference>
<dbReference type="InterPro" id="IPR036237">
    <property type="entry name" value="Xyl_isomerase-like_sf"/>
</dbReference>
<dbReference type="NCBIfam" id="NF003818">
    <property type="entry name" value="PRK05409.1"/>
    <property type="match status" value="1"/>
</dbReference>
<dbReference type="PANTHER" id="PTHR42194">
    <property type="entry name" value="UPF0276 PROTEIN HI_1600"/>
    <property type="match status" value="1"/>
</dbReference>
<dbReference type="PANTHER" id="PTHR42194:SF1">
    <property type="entry name" value="UPF0276 PROTEIN HI_1600"/>
    <property type="match status" value="1"/>
</dbReference>
<dbReference type="Pfam" id="PF05114">
    <property type="entry name" value="MbnB_TglH_ChrH"/>
    <property type="match status" value="1"/>
</dbReference>
<dbReference type="SUPFAM" id="SSF51658">
    <property type="entry name" value="Xylose isomerase-like"/>
    <property type="match status" value="1"/>
</dbReference>
<reference key="1">
    <citation type="journal article" date="2001" name="Proc. Natl. Acad. Sci. U.S.A.">
        <title>Complete genome sequence of Caulobacter crescentus.</title>
        <authorList>
            <person name="Nierman W.C."/>
            <person name="Feldblyum T.V."/>
            <person name="Laub M.T."/>
            <person name="Paulsen I.T."/>
            <person name="Nelson K.E."/>
            <person name="Eisen J.A."/>
            <person name="Heidelberg J.F."/>
            <person name="Alley M.R.K."/>
            <person name="Ohta N."/>
            <person name="Maddock J.R."/>
            <person name="Potocka I."/>
            <person name="Nelson W.C."/>
            <person name="Newton A."/>
            <person name="Stephens C."/>
            <person name="Phadke N.D."/>
            <person name="Ely B."/>
            <person name="DeBoy R.T."/>
            <person name="Dodson R.J."/>
            <person name="Durkin A.S."/>
            <person name="Gwinn M.L."/>
            <person name="Haft D.H."/>
            <person name="Kolonay J.F."/>
            <person name="Smit J."/>
            <person name="Craven M.B."/>
            <person name="Khouri H.M."/>
            <person name="Shetty J."/>
            <person name="Berry K.J."/>
            <person name="Utterback T.R."/>
            <person name="Tran K."/>
            <person name="Wolf A.M."/>
            <person name="Vamathevan J.J."/>
            <person name="Ermolaeva M.D."/>
            <person name="White O."/>
            <person name="Salzberg S.L."/>
            <person name="Venter J.C."/>
            <person name="Shapiro L."/>
            <person name="Fraser C.M."/>
        </authorList>
    </citation>
    <scope>NUCLEOTIDE SEQUENCE [LARGE SCALE GENOMIC DNA]</scope>
    <source>
        <strain>ATCC 19089 / CIP 103742 / CB 15</strain>
    </source>
</reference>